<name>DAPA1_WHEAT</name>
<dbReference type="EC" id="4.3.3.7"/>
<dbReference type="EMBL" id="M60598">
    <property type="protein sequence ID" value="AAA34263.1"/>
    <property type="molecule type" value="mRNA"/>
</dbReference>
<dbReference type="PIR" id="A39213">
    <property type="entry name" value="WZWTH7"/>
</dbReference>
<dbReference type="SMR" id="P24846"/>
<dbReference type="STRING" id="4565.P24846"/>
<dbReference type="BRENDA" id="4.3.3.7">
    <property type="organism ID" value="6500"/>
</dbReference>
<dbReference type="UniPathway" id="UPA00034">
    <property type="reaction ID" value="UER00017"/>
</dbReference>
<dbReference type="Proteomes" id="UP000019116">
    <property type="component" value="Unplaced"/>
</dbReference>
<dbReference type="ExpressionAtlas" id="P24846">
    <property type="expression patterns" value="baseline"/>
</dbReference>
<dbReference type="GO" id="GO:0009507">
    <property type="term" value="C:chloroplast"/>
    <property type="evidence" value="ECO:0007669"/>
    <property type="project" value="UniProtKB-SubCell"/>
</dbReference>
<dbReference type="GO" id="GO:0008840">
    <property type="term" value="F:4-hydroxy-tetrahydrodipicolinate synthase activity"/>
    <property type="evidence" value="ECO:0000318"/>
    <property type="project" value="GO_Central"/>
</dbReference>
<dbReference type="GO" id="GO:0019877">
    <property type="term" value="P:diaminopimelate biosynthetic process"/>
    <property type="evidence" value="ECO:0007669"/>
    <property type="project" value="UniProtKB-KW"/>
</dbReference>
<dbReference type="GO" id="GO:0009089">
    <property type="term" value="P:lysine biosynthetic process via diaminopimelate"/>
    <property type="evidence" value="ECO:0007669"/>
    <property type="project" value="UniProtKB-UniPathway"/>
</dbReference>
<dbReference type="CDD" id="cd00950">
    <property type="entry name" value="DHDPS"/>
    <property type="match status" value="1"/>
</dbReference>
<dbReference type="Gene3D" id="3.20.20.70">
    <property type="entry name" value="Aldolase class I"/>
    <property type="match status" value="1"/>
</dbReference>
<dbReference type="InterPro" id="IPR013785">
    <property type="entry name" value="Aldolase_TIM"/>
</dbReference>
<dbReference type="InterPro" id="IPR005263">
    <property type="entry name" value="DapA"/>
</dbReference>
<dbReference type="InterPro" id="IPR002220">
    <property type="entry name" value="DapA-like"/>
</dbReference>
<dbReference type="InterPro" id="IPR020625">
    <property type="entry name" value="Schiff_base-form_aldolases_AS"/>
</dbReference>
<dbReference type="InterPro" id="IPR020624">
    <property type="entry name" value="Schiff_base-form_aldolases_CS"/>
</dbReference>
<dbReference type="NCBIfam" id="TIGR00674">
    <property type="entry name" value="dapA"/>
    <property type="match status" value="1"/>
</dbReference>
<dbReference type="PANTHER" id="PTHR12128:SF15">
    <property type="entry name" value="4-HYDROXY-TETRAHYDRODIPICOLINATE SYNTHASE 1, CHLOROPLASTIC"/>
    <property type="match status" value="1"/>
</dbReference>
<dbReference type="PANTHER" id="PTHR12128">
    <property type="entry name" value="DIHYDRODIPICOLINATE SYNTHASE"/>
    <property type="match status" value="1"/>
</dbReference>
<dbReference type="Pfam" id="PF00701">
    <property type="entry name" value="DHDPS"/>
    <property type="match status" value="1"/>
</dbReference>
<dbReference type="PRINTS" id="PR00146">
    <property type="entry name" value="DHPICSNTHASE"/>
</dbReference>
<dbReference type="SMART" id="SM01130">
    <property type="entry name" value="DHDPS"/>
    <property type="match status" value="1"/>
</dbReference>
<dbReference type="SUPFAM" id="SSF51569">
    <property type="entry name" value="Aldolase"/>
    <property type="match status" value="1"/>
</dbReference>
<dbReference type="PROSITE" id="PS00665">
    <property type="entry name" value="DHDPS_1"/>
    <property type="match status" value="1"/>
</dbReference>
<dbReference type="PROSITE" id="PS00666">
    <property type="entry name" value="DHDPS_2"/>
    <property type="match status" value="1"/>
</dbReference>
<accession>P24846</accession>
<reference key="1">
    <citation type="journal article" date="1990" name="J. Biol. Chem.">
        <title>Molecular cloning of wheat dihydrodipicolinate synthase.</title>
        <authorList>
            <person name="Kaneko T."/>
            <person name="Hashimoto T."/>
            <person name="Kumpaisal R."/>
            <person name="Yamada Y."/>
        </authorList>
    </citation>
    <scope>NUCLEOTIDE SEQUENCE [MRNA]</scope>
    <scope>PROTEIN SEQUENCE OF 63-79</scope>
    <source>
        <strain>cv. Chinese Spring</strain>
    </source>
</reference>
<comment type="function">
    <text evidence="1">Catalyzes the condensation of (S)-aspartate-beta-semialdehyde [(S)-ASA] and pyruvate to 4-hydroxy-tetrahydrodipicolinate (HTPA).</text>
</comment>
<comment type="catalytic activity">
    <reaction>
        <text>L-aspartate 4-semialdehyde + pyruvate = (2S,4S)-4-hydroxy-2,3,4,5-tetrahydrodipicolinate + H2O + H(+)</text>
        <dbReference type="Rhea" id="RHEA:34171"/>
        <dbReference type="ChEBI" id="CHEBI:15361"/>
        <dbReference type="ChEBI" id="CHEBI:15377"/>
        <dbReference type="ChEBI" id="CHEBI:15378"/>
        <dbReference type="ChEBI" id="CHEBI:67139"/>
        <dbReference type="ChEBI" id="CHEBI:537519"/>
        <dbReference type="EC" id="4.3.3.7"/>
    </reaction>
</comment>
<comment type="activity regulation">
    <text>Sensitive to lysine inhibition. This inhibition increase in an allosteric manner with increasing concentration of the inhibitor.</text>
</comment>
<comment type="pathway">
    <text>Amino-acid biosynthesis; L-lysine biosynthesis via DAP pathway; (S)-tetrahydrodipicolinate from L-aspartate: step 3/4.</text>
</comment>
<comment type="subunit">
    <text>Tetramer of modified subunits derived from two genes in different combinations.</text>
</comment>
<comment type="subcellular location">
    <subcellularLocation>
        <location>Plastid</location>
        <location>Chloroplast</location>
    </subcellularLocation>
</comment>
<comment type="similarity">
    <text evidence="4">Belongs to the DapA family.</text>
</comment>
<comment type="caution">
    <text evidence="4">Was originally thought to be a dihydrodipicolinate synthase (DHDPS), catalyzing the condensation of (S)-aspartate-beta-semialdehyde [(S)-ASA] and pyruvate to dihydrodipicolinate (DHDP). However, it was shown in E.coli that the product of the enzymatic reaction is not dihydrodipicolinate but in fact (4S)-4-hydroxy-2,3,4,5-tetrahydro-(2S)-dipicolinic acid (HTPA), and that the consecutive dehydration reaction leading to DHDP is not spontaneous but catalyzed by DapB.</text>
</comment>
<evidence type="ECO:0000250" key="1"/>
<evidence type="ECO:0000256" key="2">
    <source>
        <dbReference type="SAM" id="MobiDB-lite"/>
    </source>
</evidence>
<evidence type="ECO:0000269" key="3">
    <source>
    </source>
</evidence>
<evidence type="ECO:0000305" key="4"/>
<sequence>MPYLQPPRPHPHPHPTSRLSRASPPSPFPFFPAGTSRSGRLQPVPVSGHSASRVSKGKFAVAAVTLDDYLPMRSTEVKNRTSTDGIKSLRLITAVKTPYLPDGRFDLEAYDSLINTQINGGAEGVIVGGTTGEGHLMSWDEHIMLIGHTVNCFGANIKVIGNTGSNSTREAVHATEQGFAVGMHAALHVNPYYGKTSTEGLISHFKEVLPMGPTIIYNVPSRTSQDIPPPVIEALSSYSNMAGVKECVGHERVKCYTDKGISIWSGNDDECHDSRWKYGATGVISVASNLVPGLMHSLMFEGENAALNEKLLPLMKWLFCEPNPIGLNTALAQLGVVRPVFRLPYTPLPLEKRVEFVRIVEAIGRENFVGQKESRVLDDDDFVLISRY</sequence>
<proteinExistence type="evidence at protein level"/>
<protein>
    <recommendedName>
        <fullName>4-hydroxy-tetrahydrodipicolinate synthase 1, chloroplastic</fullName>
        <shortName>HTPA synthase 1</shortName>
        <ecNumber>4.3.3.7</ecNumber>
    </recommendedName>
</protein>
<feature type="transit peptide" description="Chloroplast" evidence="3">
    <location>
        <begin position="1"/>
        <end position="62"/>
    </location>
</feature>
<feature type="chain" id="PRO_0000007203" description="4-hydroxy-tetrahydrodipicolinate synthase 1, chloroplastic">
    <location>
        <begin position="63"/>
        <end position="388"/>
    </location>
</feature>
<feature type="region of interest" description="Disordered" evidence="2">
    <location>
        <begin position="1"/>
        <end position="51"/>
    </location>
</feature>
<feature type="active site" description="Proton donor/acceptor" evidence="1">
    <location>
        <position position="217"/>
    </location>
</feature>
<feature type="active site" description="Schiff-base intermediate with substrate" evidence="1">
    <location>
        <position position="245"/>
    </location>
</feature>
<feature type="binding site" evidence="1">
    <location>
        <position position="131"/>
    </location>
    <ligand>
        <name>pyruvate</name>
        <dbReference type="ChEBI" id="CHEBI:15361"/>
    </ligand>
</feature>
<feature type="binding site" evidence="1">
    <location>
        <position position="284"/>
    </location>
    <ligand>
        <name>pyruvate</name>
        <dbReference type="ChEBI" id="CHEBI:15361"/>
    </ligand>
</feature>
<feature type="site" description="Part of a proton relay during catalysis" evidence="1">
    <location>
        <position position="130"/>
    </location>
</feature>
<feature type="site" description="Part of a proton relay during catalysis" evidence="1">
    <location>
        <position position="193"/>
    </location>
</feature>
<keyword id="KW-0021">Allosteric enzyme</keyword>
<keyword id="KW-0028">Amino-acid biosynthesis</keyword>
<keyword id="KW-0150">Chloroplast</keyword>
<keyword id="KW-0220">Diaminopimelate biosynthesis</keyword>
<keyword id="KW-0903">Direct protein sequencing</keyword>
<keyword id="KW-0456">Lyase</keyword>
<keyword id="KW-0457">Lysine biosynthesis</keyword>
<keyword id="KW-0934">Plastid</keyword>
<keyword id="KW-1185">Reference proteome</keyword>
<keyword id="KW-0704">Schiff base</keyword>
<keyword id="KW-0809">Transit peptide</keyword>
<organism>
    <name type="scientific">Triticum aestivum</name>
    <name type="common">Wheat</name>
    <dbReference type="NCBI Taxonomy" id="4565"/>
    <lineage>
        <taxon>Eukaryota</taxon>
        <taxon>Viridiplantae</taxon>
        <taxon>Streptophyta</taxon>
        <taxon>Embryophyta</taxon>
        <taxon>Tracheophyta</taxon>
        <taxon>Spermatophyta</taxon>
        <taxon>Magnoliopsida</taxon>
        <taxon>Liliopsida</taxon>
        <taxon>Poales</taxon>
        <taxon>Poaceae</taxon>
        <taxon>BOP clade</taxon>
        <taxon>Pooideae</taxon>
        <taxon>Triticodae</taxon>
        <taxon>Triticeae</taxon>
        <taxon>Triticinae</taxon>
        <taxon>Triticum</taxon>
    </lineage>
</organism>